<protein>
    <recommendedName>
        <fullName>Fiber protein</fullName>
        <shortName>SPIKE</shortName>
    </recommendedName>
    <alternativeName>
        <fullName>Protein IV</fullName>
    </alternativeName>
</protein>
<keyword id="KW-0167">Capsid protein</keyword>
<keyword id="KW-1048">Host nucleus</keyword>
<keyword id="KW-0945">Host-virus interaction</keyword>
<keyword id="KW-0426">Late protein</keyword>
<keyword id="KW-1185">Reference proteome</keyword>
<keyword id="KW-1233">Viral attachment to host adhesion receptor</keyword>
<keyword id="KW-1161">Viral attachment to host cell</keyword>
<keyword id="KW-0946">Virion</keyword>
<keyword id="KW-1160">Virus entry into host cell</keyword>
<reference key="1">
    <citation type="journal article" date="1995" name="Virus Res.">
        <title>Sequence analysis of putative pVIII, E3 and fibre regions of porcine adenovirus type 3.</title>
        <authorList>
            <person name="Reddy P.S."/>
            <person name="Nagy E."/>
            <person name="Derbyshire J.B."/>
        </authorList>
    </citation>
    <scope>NUCLEOTIDE SEQUENCE [GENOMIC DNA]</scope>
    <source>
        <strain>6618</strain>
    </source>
</reference>
<reference key="2">
    <citation type="journal article" date="1998" name="Virology">
        <title>Nucleotide sequence and transcription map of porcine adenovirus type 3.</title>
        <authorList>
            <person name="Reddy P.S."/>
            <person name="Idamakanti N."/>
            <person name="Song J.Y."/>
            <person name="Lee J.B."/>
            <person name="Hyun B.H."/>
            <person name="Park J.H."/>
            <person name="Cha S.H."/>
            <person name="Bae Y.T."/>
            <person name="Tikoo S.K."/>
            <person name="Babiuk L.A."/>
        </authorList>
    </citation>
    <scope>NUCLEOTIDE SEQUENCE [GENOMIC DNA]</scope>
    <source>
        <strain>6618</strain>
    </source>
</reference>
<reference key="3">
    <citation type="submission" date="1999-02" db="EMBL/GenBank/DDBJ databases">
        <title>Porcine adenovirus serotype 3, complete genome.</title>
        <authorList>
            <person name="Larocque D."/>
            <person name="Malenfant F."/>
            <person name="Massie B."/>
            <person name="Dea S."/>
        </authorList>
    </citation>
    <scope>NUCLEOTIDE SEQUENCE [LARGE SCALE GENOMIC DNA]</scope>
    <source>
        <strain>6618 / IAF</strain>
    </source>
</reference>
<name>SPIKE_ADEP3</name>
<dbReference type="EMBL" id="AF083132">
    <property type="protein sequence ID" value="AAC99449.1"/>
    <property type="molecule type" value="Genomic_DNA"/>
</dbReference>
<dbReference type="EMBL" id="AJ237815">
    <property type="protein sequence ID" value="CAB41035.1"/>
    <property type="molecule type" value="Genomic_DNA"/>
</dbReference>
<dbReference type="EMBL" id="AB026117">
    <property type="protein sequence ID" value="BAA76973.1"/>
    <property type="molecule type" value="Genomic_DNA"/>
</dbReference>
<dbReference type="RefSeq" id="YP_009220.1">
    <property type="nucleotide sequence ID" value="AC_000189.1"/>
</dbReference>
<dbReference type="SMR" id="Q83457"/>
<dbReference type="OrthoDB" id="14820at10239"/>
<dbReference type="Proteomes" id="UP000101284">
    <property type="component" value="Genome"/>
</dbReference>
<dbReference type="Proteomes" id="UP000130591">
    <property type="component" value="Genome"/>
</dbReference>
<dbReference type="Proteomes" id="UP000148028">
    <property type="component" value="Genome"/>
</dbReference>
<dbReference type="GO" id="GO:0042025">
    <property type="term" value="C:host cell nucleus"/>
    <property type="evidence" value="ECO:0007669"/>
    <property type="project" value="UniProtKB-SubCell"/>
</dbReference>
<dbReference type="GO" id="GO:0019028">
    <property type="term" value="C:viral capsid"/>
    <property type="evidence" value="ECO:0007669"/>
    <property type="project" value="UniProtKB-KW"/>
</dbReference>
<dbReference type="GO" id="GO:0098671">
    <property type="term" value="P:adhesion receptor-mediated virion attachment to host cell"/>
    <property type="evidence" value="ECO:0007669"/>
    <property type="project" value="UniProtKB-KW"/>
</dbReference>
<dbReference type="GO" id="GO:0007155">
    <property type="term" value="P:cell adhesion"/>
    <property type="evidence" value="ECO:0007669"/>
    <property type="project" value="InterPro"/>
</dbReference>
<dbReference type="GO" id="GO:0046718">
    <property type="term" value="P:symbiont entry into host cell"/>
    <property type="evidence" value="ECO:0007669"/>
    <property type="project" value="UniProtKB-KW"/>
</dbReference>
<dbReference type="Gene3D" id="6.20.10.20">
    <property type="match status" value="1"/>
</dbReference>
<dbReference type="Gene3D" id="2.60.90.10">
    <property type="entry name" value="Adenovirus pIV-related, attachment domain"/>
    <property type="match status" value="1"/>
</dbReference>
<dbReference type="Gene3D" id="2.10.25.20">
    <property type="entry name" value="reovirus attachment protein sigma1, domain 1"/>
    <property type="match status" value="1"/>
</dbReference>
<dbReference type="InterPro" id="IPR000931">
    <property type="entry name" value="Adeno_fibre"/>
</dbReference>
<dbReference type="InterPro" id="IPR000978">
    <property type="entry name" value="Adeno_fibre_knob"/>
</dbReference>
<dbReference type="InterPro" id="IPR000939">
    <property type="entry name" value="Adenobir_fibre_prot_rpt/shaft"/>
</dbReference>
<dbReference type="InterPro" id="IPR008982">
    <property type="entry name" value="Adenovirus_pIV-like_att"/>
</dbReference>
<dbReference type="InterPro" id="IPR009013">
    <property type="entry name" value="Attachment_protein_shaft_sf"/>
</dbReference>
<dbReference type="Pfam" id="PF00541">
    <property type="entry name" value="Adeno_knob"/>
    <property type="match status" value="1"/>
</dbReference>
<dbReference type="Pfam" id="PF00608">
    <property type="entry name" value="Adeno_shaft"/>
    <property type="match status" value="4"/>
</dbReference>
<dbReference type="PRINTS" id="PR00307">
    <property type="entry name" value="ADENOVSFIBRE"/>
</dbReference>
<dbReference type="SUPFAM" id="SSF51225">
    <property type="entry name" value="Fibre shaft of virus attachment proteins"/>
    <property type="match status" value="2"/>
</dbReference>
<dbReference type="SUPFAM" id="SSF49835">
    <property type="entry name" value="Virus attachment protein globular domain"/>
    <property type="match status" value="1"/>
</dbReference>
<comment type="function">
    <text evidence="1">Forms spikes that protrude from each vertex of the icosahedral capsid. Interacts with host receptor to provide virion initial attachment to target cell. Fiber proteins are shed during virus entry, when virus is still at the cell surface (By similarity).</text>
</comment>
<comment type="subunit">
    <text evidence="1">Homotrimer. Interacts (via N-terminal tail region) with pentons (By similarity).</text>
</comment>
<comment type="subcellular location">
    <subcellularLocation>
        <location evidence="1">Virion</location>
    </subcellularLocation>
    <subcellularLocation>
        <location evidence="1">Host nucleus</location>
    </subcellularLocation>
    <text evidence="1">Anchored to the pentons, protrudes from the virion surface.</text>
</comment>
<comment type="induction">
    <text>Expressed in the late phase of the viral replicative cycle.</text>
</comment>
<comment type="domain">
    <text evidence="1">The tail region anchors the fiber to penton base capsomers, whereas the shaft, built from several repeated motifs, allows the knob to protrude from the virion.</text>
</comment>
<comment type="miscellaneous">
    <text evidence="1">All late proteins expressed from the major late promoter are produced by alternative splicing and alternative polyadenylation of the same gene giving rise to non-overlapping ORFs. A leader sequence is present in the N-terminus of all these mRNAs and is recognized by the viral shutoff protein to provide expression although conventional translation via ribosome scanning from the cap has been shut off in the host cell (By similarity).</text>
</comment>
<comment type="similarity">
    <text evidence="2">Belongs to the adenoviridae fiber family.</text>
</comment>
<gene>
    <name type="ORF">L5</name>
</gene>
<sequence>MGPKKQKRELPEDFDPVYPYDVPQLQINPPFVSGDGFNQSVDGVLSLHIAPPLVFDNTRALTLAFGGGLQLSGKQLVVATEGSGLTTNPDGKLVLKVKSPITLTAEGISLSLGPGLSNSETGLSLQVTAPLQFQGNALTLPLAAGLQNTDGGMGVKLGSGLTTDNSQAVTVQVGNGLQLNGEGQLTVPATAPLVSGSAGISFNYSSNDFVLDNDSLSLRPKAISVTPPLQSTEDTISLNYSNDFSVDNGALTLAPTFKPYTLWTGASPTANVILTNTTTPNGTFFLCLTRVGGLVLGSFALKSSIDLTSMTKKVNFIFDGAGRLQSDSTYKGRFGFRSNDSVIEPTAAGLSPAWLMPSTFIYPRNTSGSSLTSFVYINQTYVHVDIKVNTLSTNGYSLEFNFQNMSFSAPFSTSYGTFCYVPRRTTHRPRHGPFSLRERRHLFQLLQQ</sequence>
<feature type="chain" id="PRO_0000221811" description="Fiber protein">
    <location>
        <begin position="1"/>
        <end position="448"/>
    </location>
</feature>
<accession>Q83457</accession>
<accession>Q9YTR2</accession>
<organismHost>
    <name type="scientific">Sus scrofa</name>
    <name type="common">Pig</name>
    <dbReference type="NCBI Taxonomy" id="9823"/>
</organismHost>
<evidence type="ECO:0000250" key="1"/>
<evidence type="ECO:0000305" key="2"/>
<proteinExistence type="evidence at transcript level"/>
<organism>
    <name type="scientific">Porcine adenovirus A serotype 3</name>
    <name type="common">PAdV-3</name>
    <name type="synonym">Porcine adenovirus 3</name>
    <dbReference type="NCBI Taxonomy" id="35265"/>
    <lineage>
        <taxon>Viruses</taxon>
        <taxon>Varidnaviria</taxon>
        <taxon>Bamfordvirae</taxon>
        <taxon>Preplasmiviricota</taxon>
        <taxon>Tectiliviricetes</taxon>
        <taxon>Rowavirales</taxon>
        <taxon>Adenoviridae</taxon>
        <taxon>Mastadenovirus</taxon>
        <taxon>Mastadenovirus porcustertium</taxon>
    </lineage>
</organism>